<dbReference type="EMBL" id="CP000884">
    <property type="protein sequence ID" value="ABX37859.1"/>
    <property type="molecule type" value="Genomic_DNA"/>
</dbReference>
<dbReference type="RefSeq" id="WP_012207029.1">
    <property type="nucleotide sequence ID" value="NC_010002.1"/>
</dbReference>
<dbReference type="SMR" id="A9BNG4"/>
<dbReference type="STRING" id="398578.Daci_5230"/>
<dbReference type="GeneID" id="24118097"/>
<dbReference type="KEGG" id="dac:Daci_5230"/>
<dbReference type="eggNOG" id="COG0576">
    <property type="taxonomic scope" value="Bacteria"/>
</dbReference>
<dbReference type="HOGENOM" id="CLU_057217_6_1_4"/>
<dbReference type="Proteomes" id="UP000000784">
    <property type="component" value="Chromosome"/>
</dbReference>
<dbReference type="GO" id="GO:0005829">
    <property type="term" value="C:cytosol"/>
    <property type="evidence" value="ECO:0007669"/>
    <property type="project" value="TreeGrafter"/>
</dbReference>
<dbReference type="GO" id="GO:0000774">
    <property type="term" value="F:adenyl-nucleotide exchange factor activity"/>
    <property type="evidence" value="ECO:0007669"/>
    <property type="project" value="InterPro"/>
</dbReference>
<dbReference type="GO" id="GO:0042803">
    <property type="term" value="F:protein homodimerization activity"/>
    <property type="evidence" value="ECO:0007669"/>
    <property type="project" value="InterPro"/>
</dbReference>
<dbReference type="GO" id="GO:0051087">
    <property type="term" value="F:protein-folding chaperone binding"/>
    <property type="evidence" value="ECO:0007669"/>
    <property type="project" value="InterPro"/>
</dbReference>
<dbReference type="GO" id="GO:0051082">
    <property type="term" value="F:unfolded protein binding"/>
    <property type="evidence" value="ECO:0007669"/>
    <property type="project" value="TreeGrafter"/>
</dbReference>
<dbReference type="GO" id="GO:0006457">
    <property type="term" value="P:protein folding"/>
    <property type="evidence" value="ECO:0007669"/>
    <property type="project" value="InterPro"/>
</dbReference>
<dbReference type="CDD" id="cd00446">
    <property type="entry name" value="GrpE"/>
    <property type="match status" value="1"/>
</dbReference>
<dbReference type="FunFam" id="2.30.22.10:FF:000001">
    <property type="entry name" value="Protein GrpE"/>
    <property type="match status" value="1"/>
</dbReference>
<dbReference type="Gene3D" id="3.90.20.20">
    <property type="match status" value="1"/>
</dbReference>
<dbReference type="Gene3D" id="2.30.22.10">
    <property type="entry name" value="Head domain of nucleotide exchange factor GrpE"/>
    <property type="match status" value="1"/>
</dbReference>
<dbReference type="HAMAP" id="MF_01151">
    <property type="entry name" value="GrpE"/>
    <property type="match status" value="1"/>
</dbReference>
<dbReference type="InterPro" id="IPR000740">
    <property type="entry name" value="GrpE"/>
</dbReference>
<dbReference type="InterPro" id="IPR013805">
    <property type="entry name" value="GrpE_coiled_coil"/>
</dbReference>
<dbReference type="InterPro" id="IPR009012">
    <property type="entry name" value="GrpE_head"/>
</dbReference>
<dbReference type="NCBIfam" id="NF010737">
    <property type="entry name" value="PRK14139.1"/>
    <property type="match status" value="1"/>
</dbReference>
<dbReference type="NCBIfam" id="NF010738">
    <property type="entry name" value="PRK14140.1"/>
    <property type="match status" value="1"/>
</dbReference>
<dbReference type="NCBIfam" id="NF010748">
    <property type="entry name" value="PRK14150.1"/>
    <property type="match status" value="1"/>
</dbReference>
<dbReference type="PANTHER" id="PTHR21237">
    <property type="entry name" value="GRPE PROTEIN"/>
    <property type="match status" value="1"/>
</dbReference>
<dbReference type="PANTHER" id="PTHR21237:SF23">
    <property type="entry name" value="GRPE PROTEIN HOMOLOG, MITOCHONDRIAL"/>
    <property type="match status" value="1"/>
</dbReference>
<dbReference type="Pfam" id="PF01025">
    <property type="entry name" value="GrpE"/>
    <property type="match status" value="1"/>
</dbReference>
<dbReference type="PRINTS" id="PR00773">
    <property type="entry name" value="GRPEPROTEIN"/>
</dbReference>
<dbReference type="SUPFAM" id="SSF58014">
    <property type="entry name" value="Coiled-coil domain of nucleotide exchange factor GrpE"/>
    <property type="match status" value="1"/>
</dbReference>
<dbReference type="SUPFAM" id="SSF51064">
    <property type="entry name" value="Head domain of nucleotide exchange factor GrpE"/>
    <property type="match status" value="1"/>
</dbReference>
<dbReference type="PROSITE" id="PS01071">
    <property type="entry name" value="GRPE"/>
    <property type="match status" value="1"/>
</dbReference>
<protein>
    <recommendedName>
        <fullName evidence="1">Protein GrpE</fullName>
    </recommendedName>
    <alternativeName>
        <fullName evidence="1">HSP-70 cofactor</fullName>
    </alternativeName>
</protein>
<sequence length="181" mass="19643">MSEQNSNPLQDAAPEEIEAAMAANAADELQRLQTELAELKAKSAELADQFLRAKAEAENVRRRAEDEVSKARKFGIESFAESLLPVCDSLDAALAIQQATPEQLREGADATLRQLTSALERNKVVTINPAAGEKFDPNLHQAISMVPAQQEANTVVSVLQKGYLIADRILRPALVTVAQPQ</sequence>
<keyword id="KW-0143">Chaperone</keyword>
<keyword id="KW-0963">Cytoplasm</keyword>
<keyword id="KW-1185">Reference proteome</keyword>
<keyword id="KW-0346">Stress response</keyword>
<organism>
    <name type="scientific">Delftia acidovorans (strain DSM 14801 / SPH-1)</name>
    <dbReference type="NCBI Taxonomy" id="398578"/>
    <lineage>
        <taxon>Bacteria</taxon>
        <taxon>Pseudomonadati</taxon>
        <taxon>Pseudomonadota</taxon>
        <taxon>Betaproteobacteria</taxon>
        <taxon>Burkholderiales</taxon>
        <taxon>Comamonadaceae</taxon>
        <taxon>Delftia</taxon>
    </lineage>
</organism>
<accession>A9BNG4</accession>
<feature type="chain" id="PRO_1000137558" description="Protein GrpE">
    <location>
        <begin position="1"/>
        <end position="181"/>
    </location>
</feature>
<gene>
    <name evidence="1" type="primary">grpE</name>
    <name type="ordered locus">Daci_5230</name>
</gene>
<reference key="1">
    <citation type="submission" date="2007-11" db="EMBL/GenBank/DDBJ databases">
        <title>Complete sequence of Delftia acidovorans DSM 14801 / SPH-1.</title>
        <authorList>
            <person name="Copeland A."/>
            <person name="Lucas S."/>
            <person name="Lapidus A."/>
            <person name="Barry K."/>
            <person name="Glavina del Rio T."/>
            <person name="Dalin E."/>
            <person name="Tice H."/>
            <person name="Pitluck S."/>
            <person name="Lowry S."/>
            <person name="Clum A."/>
            <person name="Schmutz J."/>
            <person name="Larimer F."/>
            <person name="Land M."/>
            <person name="Hauser L."/>
            <person name="Kyrpides N."/>
            <person name="Kim E."/>
            <person name="Schleheck D."/>
            <person name="Richardson P."/>
        </authorList>
    </citation>
    <scope>NUCLEOTIDE SEQUENCE [LARGE SCALE GENOMIC DNA]</scope>
    <source>
        <strain>DSM 14801 / SPH-1</strain>
    </source>
</reference>
<proteinExistence type="inferred from homology"/>
<comment type="function">
    <text evidence="1">Participates actively in the response to hyperosmotic and heat shock by preventing the aggregation of stress-denatured proteins, in association with DnaK and GrpE. It is the nucleotide exchange factor for DnaK and may function as a thermosensor. Unfolded proteins bind initially to DnaJ; upon interaction with the DnaJ-bound protein, DnaK hydrolyzes its bound ATP, resulting in the formation of a stable complex. GrpE releases ADP from DnaK; ATP binding to DnaK triggers the release of the substrate protein, thus completing the reaction cycle. Several rounds of ATP-dependent interactions between DnaJ, DnaK and GrpE are required for fully efficient folding.</text>
</comment>
<comment type="subunit">
    <text evidence="1">Homodimer.</text>
</comment>
<comment type="subcellular location">
    <subcellularLocation>
        <location evidence="1">Cytoplasm</location>
    </subcellularLocation>
</comment>
<comment type="similarity">
    <text evidence="1">Belongs to the GrpE family.</text>
</comment>
<name>GRPE_DELAS</name>
<evidence type="ECO:0000255" key="1">
    <source>
        <dbReference type="HAMAP-Rule" id="MF_01151"/>
    </source>
</evidence>